<dbReference type="EC" id="1.2.1.70" evidence="1"/>
<dbReference type="EMBL" id="AE016853">
    <property type="protein sequence ID" value="AAO54637.1"/>
    <property type="molecule type" value="Genomic_DNA"/>
</dbReference>
<dbReference type="RefSeq" id="NP_790942.1">
    <property type="nucleotide sequence ID" value="NC_004578.1"/>
</dbReference>
<dbReference type="RefSeq" id="WP_005615192.1">
    <property type="nucleotide sequence ID" value="NC_004578.1"/>
</dbReference>
<dbReference type="SMR" id="Q888C2"/>
<dbReference type="STRING" id="223283.PSPTO_1108"/>
<dbReference type="GeneID" id="1182744"/>
<dbReference type="KEGG" id="pst:PSPTO_1108"/>
<dbReference type="PATRIC" id="fig|223283.9.peg.1118"/>
<dbReference type="eggNOG" id="COG0373">
    <property type="taxonomic scope" value="Bacteria"/>
</dbReference>
<dbReference type="HOGENOM" id="CLU_035113_2_2_6"/>
<dbReference type="OrthoDB" id="110209at2"/>
<dbReference type="PhylomeDB" id="Q888C2"/>
<dbReference type="UniPathway" id="UPA00251">
    <property type="reaction ID" value="UER00316"/>
</dbReference>
<dbReference type="Proteomes" id="UP000002515">
    <property type="component" value="Chromosome"/>
</dbReference>
<dbReference type="GO" id="GO:0008883">
    <property type="term" value="F:glutamyl-tRNA reductase activity"/>
    <property type="evidence" value="ECO:0007669"/>
    <property type="project" value="UniProtKB-UniRule"/>
</dbReference>
<dbReference type="GO" id="GO:0050661">
    <property type="term" value="F:NADP binding"/>
    <property type="evidence" value="ECO:0007669"/>
    <property type="project" value="InterPro"/>
</dbReference>
<dbReference type="GO" id="GO:0019353">
    <property type="term" value="P:protoporphyrinogen IX biosynthetic process from glutamate"/>
    <property type="evidence" value="ECO:0007669"/>
    <property type="project" value="TreeGrafter"/>
</dbReference>
<dbReference type="CDD" id="cd05213">
    <property type="entry name" value="NAD_bind_Glutamyl_tRNA_reduct"/>
    <property type="match status" value="1"/>
</dbReference>
<dbReference type="FunFam" id="3.30.460.30:FF:000001">
    <property type="entry name" value="Glutamyl-tRNA reductase"/>
    <property type="match status" value="1"/>
</dbReference>
<dbReference type="FunFam" id="3.40.50.720:FF:000031">
    <property type="entry name" value="Glutamyl-tRNA reductase"/>
    <property type="match status" value="1"/>
</dbReference>
<dbReference type="Gene3D" id="3.30.460.30">
    <property type="entry name" value="Glutamyl-tRNA reductase, N-terminal domain"/>
    <property type="match status" value="1"/>
</dbReference>
<dbReference type="Gene3D" id="3.40.50.720">
    <property type="entry name" value="NAD(P)-binding Rossmann-like Domain"/>
    <property type="match status" value="1"/>
</dbReference>
<dbReference type="HAMAP" id="MF_00087">
    <property type="entry name" value="Glu_tRNA_reductase"/>
    <property type="match status" value="1"/>
</dbReference>
<dbReference type="InterPro" id="IPR000343">
    <property type="entry name" value="4pyrrol_synth_GluRdtase"/>
</dbReference>
<dbReference type="InterPro" id="IPR015896">
    <property type="entry name" value="4pyrrol_synth_GluRdtase_dimer"/>
</dbReference>
<dbReference type="InterPro" id="IPR015895">
    <property type="entry name" value="4pyrrol_synth_GluRdtase_N"/>
</dbReference>
<dbReference type="InterPro" id="IPR018214">
    <property type="entry name" value="GluRdtase_CS"/>
</dbReference>
<dbReference type="InterPro" id="IPR036453">
    <property type="entry name" value="GluRdtase_dimer_dom_sf"/>
</dbReference>
<dbReference type="InterPro" id="IPR036343">
    <property type="entry name" value="GluRdtase_N_sf"/>
</dbReference>
<dbReference type="InterPro" id="IPR036291">
    <property type="entry name" value="NAD(P)-bd_dom_sf"/>
</dbReference>
<dbReference type="InterPro" id="IPR006151">
    <property type="entry name" value="Shikm_DH/Glu-tRNA_Rdtase"/>
</dbReference>
<dbReference type="NCBIfam" id="TIGR01035">
    <property type="entry name" value="hemA"/>
    <property type="match status" value="1"/>
</dbReference>
<dbReference type="PANTHER" id="PTHR43013">
    <property type="entry name" value="GLUTAMYL-TRNA REDUCTASE"/>
    <property type="match status" value="1"/>
</dbReference>
<dbReference type="PANTHER" id="PTHR43013:SF1">
    <property type="entry name" value="GLUTAMYL-TRNA REDUCTASE"/>
    <property type="match status" value="1"/>
</dbReference>
<dbReference type="Pfam" id="PF00745">
    <property type="entry name" value="GlutR_dimer"/>
    <property type="match status" value="1"/>
</dbReference>
<dbReference type="Pfam" id="PF05201">
    <property type="entry name" value="GlutR_N"/>
    <property type="match status" value="1"/>
</dbReference>
<dbReference type="Pfam" id="PF01488">
    <property type="entry name" value="Shikimate_DH"/>
    <property type="match status" value="1"/>
</dbReference>
<dbReference type="PIRSF" id="PIRSF000445">
    <property type="entry name" value="4pyrrol_synth_GluRdtase"/>
    <property type="match status" value="1"/>
</dbReference>
<dbReference type="SUPFAM" id="SSF69742">
    <property type="entry name" value="Glutamyl tRNA-reductase catalytic, N-terminal domain"/>
    <property type="match status" value="1"/>
</dbReference>
<dbReference type="SUPFAM" id="SSF69075">
    <property type="entry name" value="Glutamyl tRNA-reductase dimerization domain"/>
    <property type="match status" value="1"/>
</dbReference>
<dbReference type="SUPFAM" id="SSF51735">
    <property type="entry name" value="NAD(P)-binding Rossmann-fold domains"/>
    <property type="match status" value="1"/>
</dbReference>
<dbReference type="PROSITE" id="PS00747">
    <property type="entry name" value="GLUTR"/>
    <property type="match status" value="1"/>
</dbReference>
<protein>
    <recommendedName>
        <fullName evidence="1">Glutamyl-tRNA reductase</fullName>
        <shortName evidence="1">GluTR</shortName>
        <ecNumber evidence="1">1.2.1.70</ecNumber>
    </recommendedName>
</protein>
<proteinExistence type="inferred from homology"/>
<evidence type="ECO:0000255" key="1">
    <source>
        <dbReference type="HAMAP-Rule" id="MF_00087"/>
    </source>
</evidence>
<sequence>MAFLALGINHKTASVDVRERVAFTPEQLVDALQQLCHLTESREAAILSTCNRSELYIEHEHLGADSILAWLANYHHLSLEELRASAYVHEDDAAVRHMMRVASGLDSLVLGEPQILGQMKSAYAVAREAGTVGPLLGRLFQATFSAAKQVRTDTAIGENPVSVAFAAVSLAKQIFSDLQRSQALLIGAGETITLVARHLHDLGVKRIVVANRTLERASILAAEFGAHAVLLSDIPAELVNSDIVISSTASQLPILGKGAVESALKLRKHKPIFMVDIAVPRDIEPEVGELDDVYLYSVDDLHEVVAENLKSRQGAALAAEQLVSVGAEDFMSRLRELAAVDVLRAYRQQSERLRDEELSKAQRMLANGSNAEDVLIQLARGLTNKLLHAPSVQLKKLSAEGRVDALAMAQELFALGEGSTDKTPQ</sequence>
<comment type="function">
    <text evidence="1">Catalyzes the NADPH-dependent reduction of glutamyl-tRNA(Glu) to glutamate 1-semialdehyde (GSA).</text>
</comment>
<comment type="catalytic activity">
    <reaction evidence="1">
        <text>(S)-4-amino-5-oxopentanoate + tRNA(Glu) + NADP(+) = L-glutamyl-tRNA(Glu) + NADPH + H(+)</text>
        <dbReference type="Rhea" id="RHEA:12344"/>
        <dbReference type="Rhea" id="RHEA-COMP:9663"/>
        <dbReference type="Rhea" id="RHEA-COMP:9680"/>
        <dbReference type="ChEBI" id="CHEBI:15378"/>
        <dbReference type="ChEBI" id="CHEBI:57501"/>
        <dbReference type="ChEBI" id="CHEBI:57783"/>
        <dbReference type="ChEBI" id="CHEBI:58349"/>
        <dbReference type="ChEBI" id="CHEBI:78442"/>
        <dbReference type="ChEBI" id="CHEBI:78520"/>
        <dbReference type="EC" id="1.2.1.70"/>
    </reaction>
</comment>
<comment type="pathway">
    <text evidence="1">Porphyrin-containing compound metabolism; protoporphyrin-IX biosynthesis; 5-aminolevulinate from L-glutamyl-tRNA(Glu): step 1/2.</text>
</comment>
<comment type="subunit">
    <text evidence="1">Homodimer.</text>
</comment>
<comment type="domain">
    <text evidence="1">Possesses an unusual extended V-shaped dimeric structure with each monomer consisting of three distinct domains arranged along a curved 'spinal' alpha-helix. The N-terminal catalytic domain specifically recognizes the glutamate moiety of the substrate. The second domain is the NADPH-binding domain, and the third C-terminal domain is responsible for dimerization.</text>
</comment>
<comment type="miscellaneous">
    <text evidence="1">During catalysis, the active site Cys acts as a nucleophile attacking the alpha-carbonyl group of tRNA-bound glutamate with the formation of a thioester intermediate between enzyme and glutamate, and the concomitant release of tRNA(Glu). The thioester intermediate is finally reduced by direct hydride transfer from NADPH, to form the product GSA.</text>
</comment>
<comment type="similarity">
    <text evidence="1">Belongs to the glutamyl-tRNA reductase family.</text>
</comment>
<name>HEM1_PSESM</name>
<keyword id="KW-0521">NADP</keyword>
<keyword id="KW-0560">Oxidoreductase</keyword>
<keyword id="KW-0627">Porphyrin biosynthesis</keyword>
<keyword id="KW-1185">Reference proteome</keyword>
<organism>
    <name type="scientific">Pseudomonas syringae pv. tomato (strain ATCC BAA-871 / DC3000)</name>
    <dbReference type="NCBI Taxonomy" id="223283"/>
    <lineage>
        <taxon>Bacteria</taxon>
        <taxon>Pseudomonadati</taxon>
        <taxon>Pseudomonadota</taxon>
        <taxon>Gammaproteobacteria</taxon>
        <taxon>Pseudomonadales</taxon>
        <taxon>Pseudomonadaceae</taxon>
        <taxon>Pseudomonas</taxon>
    </lineage>
</organism>
<gene>
    <name evidence="1" type="primary">hemA</name>
    <name type="ordered locus">PSPTO_1108</name>
</gene>
<accession>Q888C2</accession>
<feature type="chain" id="PRO_0000114060" description="Glutamyl-tRNA reductase">
    <location>
        <begin position="1"/>
        <end position="425"/>
    </location>
</feature>
<feature type="active site" description="Nucleophile" evidence="1">
    <location>
        <position position="50"/>
    </location>
</feature>
<feature type="binding site" evidence="1">
    <location>
        <begin position="49"/>
        <end position="52"/>
    </location>
    <ligand>
        <name>substrate</name>
    </ligand>
</feature>
<feature type="binding site" evidence="1">
    <location>
        <position position="107"/>
    </location>
    <ligand>
        <name>substrate</name>
    </ligand>
</feature>
<feature type="binding site" evidence="1">
    <location>
        <begin position="112"/>
        <end position="114"/>
    </location>
    <ligand>
        <name>substrate</name>
    </ligand>
</feature>
<feature type="binding site" evidence="1">
    <location>
        <position position="118"/>
    </location>
    <ligand>
        <name>substrate</name>
    </ligand>
</feature>
<feature type="binding site" evidence="1">
    <location>
        <begin position="187"/>
        <end position="192"/>
    </location>
    <ligand>
        <name>NADP(+)</name>
        <dbReference type="ChEBI" id="CHEBI:58349"/>
    </ligand>
</feature>
<feature type="site" description="Important for activity" evidence="1">
    <location>
        <position position="97"/>
    </location>
</feature>
<reference key="1">
    <citation type="journal article" date="2003" name="Proc. Natl. Acad. Sci. U.S.A.">
        <title>The complete genome sequence of the Arabidopsis and tomato pathogen Pseudomonas syringae pv. tomato DC3000.</title>
        <authorList>
            <person name="Buell C.R."/>
            <person name="Joardar V."/>
            <person name="Lindeberg M."/>
            <person name="Selengut J."/>
            <person name="Paulsen I.T."/>
            <person name="Gwinn M.L."/>
            <person name="Dodson R.J."/>
            <person name="DeBoy R.T."/>
            <person name="Durkin A.S."/>
            <person name="Kolonay J.F."/>
            <person name="Madupu R."/>
            <person name="Daugherty S.C."/>
            <person name="Brinkac L.M."/>
            <person name="Beanan M.J."/>
            <person name="Haft D.H."/>
            <person name="Nelson W.C."/>
            <person name="Davidsen T.M."/>
            <person name="Zafar N."/>
            <person name="Zhou L."/>
            <person name="Liu J."/>
            <person name="Yuan Q."/>
            <person name="Khouri H.M."/>
            <person name="Fedorova N.B."/>
            <person name="Tran B."/>
            <person name="Russell D."/>
            <person name="Berry K.J."/>
            <person name="Utterback T.R."/>
            <person name="Van Aken S.E."/>
            <person name="Feldblyum T.V."/>
            <person name="D'Ascenzo M."/>
            <person name="Deng W.-L."/>
            <person name="Ramos A.R."/>
            <person name="Alfano J.R."/>
            <person name="Cartinhour S."/>
            <person name="Chatterjee A.K."/>
            <person name="Delaney T.P."/>
            <person name="Lazarowitz S.G."/>
            <person name="Martin G.B."/>
            <person name="Schneider D.J."/>
            <person name="Tang X."/>
            <person name="Bender C.L."/>
            <person name="White O."/>
            <person name="Fraser C.M."/>
            <person name="Collmer A."/>
        </authorList>
    </citation>
    <scope>NUCLEOTIDE SEQUENCE [LARGE SCALE GENOMIC DNA]</scope>
    <source>
        <strain>ATCC BAA-871 / DC3000</strain>
    </source>
</reference>